<organism>
    <name type="scientific">Escherichia coli (strain SE11)</name>
    <dbReference type="NCBI Taxonomy" id="409438"/>
    <lineage>
        <taxon>Bacteria</taxon>
        <taxon>Pseudomonadati</taxon>
        <taxon>Pseudomonadota</taxon>
        <taxon>Gammaproteobacteria</taxon>
        <taxon>Enterobacterales</taxon>
        <taxon>Enterobacteriaceae</taxon>
        <taxon>Escherichia</taxon>
    </lineage>
</organism>
<evidence type="ECO:0000255" key="1">
    <source>
        <dbReference type="HAMAP-Rule" id="MF_00765"/>
    </source>
</evidence>
<proteinExistence type="inferred from homology"/>
<dbReference type="EMBL" id="AP009240">
    <property type="protein sequence ID" value="BAG80063.1"/>
    <property type="molecule type" value="Genomic_DNA"/>
</dbReference>
<dbReference type="SMR" id="B6I2E6"/>
<dbReference type="KEGG" id="ecy:ECSE_4539"/>
<dbReference type="HOGENOM" id="CLU_106757_2_0_6"/>
<dbReference type="Proteomes" id="UP000008199">
    <property type="component" value="Chromosome"/>
</dbReference>
<dbReference type="GO" id="GO:0005829">
    <property type="term" value="C:cytosol"/>
    <property type="evidence" value="ECO:0007669"/>
    <property type="project" value="TreeGrafter"/>
</dbReference>
<dbReference type="GO" id="GO:0043022">
    <property type="term" value="F:ribosome binding"/>
    <property type="evidence" value="ECO:0007669"/>
    <property type="project" value="UniProtKB-UniRule"/>
</dbReference>
<dbReference type="GO" id="GO:0019843">
    <property type="term" value="F:rRNA binding"/>
    <property type="evidence" value="ECO:0007669"/>
    <property type="project" value="UniProtKB-UniRule"/>
</dbReference>
<dbReference type="GO" id="GO:1902626">
    <property type="term" value="P:assembly of large subunit precursor of preribosome"/>
    <property type="evidence" value="ECO:0007669"/>
    <property type="project" value="UniProtKB-UniRule"/>
</dbReference>
<dbReference type="CDD" id="cd16331">
    <property type="entry name" value="YjgA-like"/>
    <property type="match status" value="1"/>
</dbReference>
<dbReference type="FunFam" id="1.10.60.30:FF:000001">
    <property type="entry name" value="UPF0307 protein YjgA"/>
    <property type="match status" value="1"/>
</dbReference>
<dbReference type="FunFam" id="1.10.60.30:FF:000002">
    <property type="entry name" value="UPF0307 protein YjgA"/>
    <property type="match status" value="1"/>
</dbReference>
<dbReference type="Gene3D" id="1.10.60.30">
    <property type="entry name" value="PSPTO4464-like domains"/>
    <property type="match status" value="2"/>
</dbReference>
<dbReference type="HAMAP" id="MF_00765">
    <property type="entry name" value="DarP"/>
    <property type="match status" value="1"/>
</dbReference>
<dbReference type="InterPro" id="IPR006839">
    <property type="entry name" value="DarP"/>
</dbReference>
<dbReference type="InterPro" id="IPR023153">
    <property type="entry name" value="DarP_sf"/>
</dbReference>
<dbReference type="NCBIfam" id="NF003593">
    <property type="entry name" value="PRK05255.1-1"/>
    <property type="match status" value="1"/>
</dbReference>
<dbReference type="PANTHER" id="PTHR38101">
    <property type="entry name" value="UPF0307 PROTEIN YJGA"/>
    <property type="match status" value="1"/>
</dbReference>
<dbReference type="PANTHER" id="PTHR38101:SF1">
    <property type="entry name" value="UPF0307 PROTEIN YJGA"/>
    <property type="match status" value="1"/>
</dbReference>
<dbReference type="Pfam" id="PF04751">
    <property type="entry name" value="DarP"/>
    <property type="match status" value="1"/>
</dbReference>
<dbReference type="PIRSF" id="PIRSF016183">
    <property type="entry name" value="UCP016183"/>
    <property type="match status" value="1"/>
</dbReference>
<dbReference type="SUPFAM" id="SSF158710">
    <property type="entry name" value="PSPTO4464-like"/>
    <property type="match status" value="1"/>
</dbReference>
<comment type="function">
    <text evidence="1">Member of a network of 50S ribosomal subunit biogenesis factors which assembles along the 30S-50S interface, preventing incorrect 23S rRNA structures from forming. Promotes peptidyl transferase center (PTC) maturation.</text>
</comment>
<comment type="subcellular location">
    <subcellularLocation>
        <location evidence="1">Cytoplasm</location>
    </subcellularLocation>
    <text evidence="1">Associates with late stage pre-50S ribosomal subunits.</text>
</comment>
<comment type="similarity">
    <text evidence="1">Belongs to the DarP family.</text>
</comment>
<accession>B6I2E6</accession>
<feature type="chain" id="PRO_1000198379" description="Dual-action ribosomal maturation protein DarP">
    <location>
        <begin position="1"/>
        <end position="183"/>
    </location>
</feature>
<keyword id="KW-0963">Cytoplasm</keyword>
<keyword id="KW-0690">Ribosome biogenesis</keyword>
<keyword id="KW-0694">RNA-binding</keyword>
<keyword id="KW-0699">rRNA-binding</keyword>
<gene>
    <name evidence="1" type="primary">darP</name>
    <name type="ordered locus">ECSE_4539</name>
</gene>
<reference key="1">
    <citation type="journal article" date="2008" name="DNA Res.">
        <title>Complete genome sequence and comparative analysis of the wild-type commensal Escherichia coli strain SE11 isolated from a healthy adult.</title>
        <authorList>
            <person name="Oshima K."/>
            <person name="Toh H."/>
            <person name="Ogura Y."/>
            <person name="Sasamoto H."/>
            <person name="Morita H."/>
            <person name="Park S.-H."/>
            <person name="Ooka T."/>
            <person name="Iyoda S."/>
            <person name="Taylor T.D."/>
            <person name="Hayashi T."/>
            <person name="Itoh K."/>
            <person name="Hattori M."/>
        </authorList>
    </citation>
    <scope>NUCLEOTIDE SEQUENCE [LARGE SCALE GENOMIC DNA]</scope>
    <source>
        <strain>SE11</strain>
    </source>
</reference>
<protein>
    <recommendedName>
        <fullName evidence="1">Dual-action ribosomal maturation protein DarP</fullName>
    </recommendedName>
    <alternativeName>
        <fullName evidence="1">Large ribosomal subunit assembly factor DarP</fullName>
    </alternativeName>
</protein>
<name>DARP_ECOSE</name>
<sequence>MTKQPEDWLDDVPGDDIEDEDDEIIWVSKSEIKRDAEELKRLGAEIVDLGKNALDKIPLDADLRAAIELAQRIKMEGRRRQLQLIGKMLRQRDVEPIRQALDKLKNRHNQQVVLFHKLENLRDRLIDQGDDAIAEVLNLWPDADRQQLRTLIRNAKKEKEGNKPPKSARQIFQYLRELAENEG</sequence>